<reference key="1">
    <citation type="submission" date="2006-03" db="EMBL/GenBank/DDBJ databases">
        <title>Complete sequence of chromosome of Psychrobacter cryohalolentis K5.</title>
        <authorList>
            <consortium name="US DOE Joint Genome Institute"/>
            <person name="Copeland A."/>
            <person name="Lucas S."/>
            <person name="Lapidus A."/>
            <person name="Barry K."/>
            <person name="Detter J.C."/>
            <person name="Glavina T."/>
            <person name="Hammon N."/>
            <person name="Israni S."/>
            <person name="Dalin E."/>
            <person name="Tice H."/>
            <person name="Pitluck S."/>
            <person name="Brettin T."/>
            <person name="Bruce D."/>
            <person name="Han C."/>
            <person name="Tapia R."/>
            <person name="Sims D.R."/>
            <person name="Gilna P."/>
            <person name="Schmutz J."/>
            <person name="Larimer F."/>
            <person name="Land M."/>
            <person name="Hauser L."/>
            <person name="Kyrpides N."/>
            <person name="Kim E."/>
            <person name="Richardson P."/>
        </authorList>
    </citation>
    <scope>NUCLEOTIDE SEQUENCE [LARGE SCALE GENOMIC DNA]</scope>
    <source>
        <strain>ATCC BAA-1226 / DSM 17306 / VKM B-2378 / K5</strain>
    </source>
</reference>
<comment type="function">
    <text evidence="1">Catalyzes the phosphorylation of the position 2 hydroxy group of 4-diphosphocytidyl-2C-methyl-D-erythritol.</text>
</comment>
<comment type="catalytic activity">
    <reaction evidence="1">
        <text>4-CDP-2-C-methyl-D-erythritol + ATP = 4-CDP-2-C-methyl-D-erythritol 2-phosphate + ADP + H(+)</text>
        <dbReference type="Rhea" id="RHEA:18437"/>
        <dbReference type="ChEBI" id="CHEBI:15378"/>
        <dbReference type="ChEBI" id="CHEBI:30616"/>
        <dbReference type="ChEBI" id="CHEBI:57823"/>
        <dbReference type="ChEBI" id="CHEBI:57919"/>
        <dbReference type="ChEBI" id="CHEBI:456216"/>
        <dbReference type="EC" id="2.7.1.148"/>
    </reaction>
</comment>
<comment type="pathway">
    <text evidence="1">Isoprenoid biosynthesis; isopentenyl diphosphate biosynthesis via DXP pathway; isopentenyl diphosphate from 1-deoxy-D-xylulose 5-phosphate: step 3/6.</text>
</comment>
<comment type="similarity">
    <text evidence="1">Belongs to the GHMP kinase family. IspE subfamily.</text>
</comment>
<gene>
    <name evidence="1" type="primary">ispE</name>
    <name type="ordered locus">Pcryo_0186</name>
</gene>
<dbReference type="EC" id="2.7.1.148" evidence="1"/>
<dbReference type="EMBL" id="CP000323">
    <property type="protein sequence ID" value="ABE73970.1"/>
    <property type="molecule type" value="Genomic_DNA"/>
</dbReference>
<dbReference type="RefSeq" id="WP_011512559.1">
    <property type="nucleotide sequence ID" value="NC_007969.1"/>
</dbReference>
<dbReference type="SMR" id="Q1QED3"/>
<dbReference type="STRING" id="335284.Pcryo_0186"/>
<dbReference type="KEGG" id="pcr:Pcryo_0186"/>
<dbReference type="eggNOG" id="COG1947">
    <property type="taxonomic scope" value="Bacteria"/>
</dbReference>
<dbReference type="HOGENOM" id="CLU_053057_3_0_6"/>
<dbReference type="UniPathway" id="UPA00056">
    <property type="reaction ID" value="UER00094"/>
</dbReference>
<dbReference type="Proteomes" id="UP000002425">
    <property type="component" value="Chromosome"/>
</dbReference>
<dbReference type="GO" id="GO:0050515">
    <property type="term" value="F:4-(cytidine 5'-diphospho)-2-C-methyl-D-erythritol kinase activity"/>
    <property type="evidence" value="ECO:0007669"/>
    <property type="project" value="UniProtKB-UniRule"/>
</dbReference>
<dbReference type="GO" id="GO:0005524">
    <property type="term" value="F:ATP binding"/>
    <property type="evidence" value="ECO:0007669"/>
    <property type="project" value="UniProtKB-UniRule"/>
</dbReference>
<dbReference type="GO" id="GO:0019288">
    <property type="term" value="P:isopentenyl diphosphate biosynthetic process, methylerythritol 4-phosphate pathway"/>
    <property type="evidence" value="ECO:0007669"/>
    <property type="project" value="UniProtKB-UniRule"/>
</dbReference>
<dbReference type="GO" id="GO:0016114">
    <property type="term" value="P:terpenoid biosynthetic process"/>
    <property type="evidence" value="ECO:0007669"/>
    <property type="project" value="InterPro"/>
</dbReference>
<dbReference type="Gene3D" id="3.30.230.10">
    <property type="match status" value="1"/>
</dbReference>
<dbReference type="Gene3D" id="3.30.70.890">
    <property type="entry name" value="GHMP kinase, C-terminal domain"/>
    <property type="match status" value="1"/>
</dbReference>
<dbReference type="HAMAP" id="MF_00061">
    <property type="entry name" value="IspE"/>
    <property type="match status" value="1"/>
</dbReference>
<dbReference type="InterPro" id="IPR036554">
    <property type="entry name" value="GHMP_kinase_C_sf"/>
</dbReference>
<dbReference type="InterPro" id="IPR006204">
    <property type="entry name" value="GHMP_kinase_N_dom"/>
</dbReference>
<dbReference type="InterPro" id="IPR004424">
    <property type="entry name" value="IspE"/>
</dbReference>
<dbReference type="InterPro" id="IPR020568">
    <property type="entry name" value="Ribosomal_Su5_D2-typ_SF"/>
</dbReference>
<dbReference type="InterPro" id="IPR014721">
    <property type="entry name" value="Ribsml_uS5_D2-typ_fold_subgr"/>
</dbReference>
<dbReference type="NCBIfam" id="TIGR00154">
    <property type="entry name" value="ispE"/>
    <property type="match status" value="1"/>
</dbReference>
<dbReference type="PANTHER" id="PTHR43527">
    <property type="entry name" value="4-DIPHOSPHOCYTIDYL-2-C-METHYL-D-ERYTHRITOL KINASE, CHLOROPLASTIC"/>
    <property type="match status" value="1"/>
</dbReference>
<dbReference type="PANTHER" id="PTHR43527:SF2">
    <property type="entry name" value="4-DIPHOSPHOCYTIDYL-2-C-METHYL-D-ERYTHRITOL KINASE, CHLOROPLASTIC"/>
    <property type="match status" value="1"/>
</dbReference>
<dbReference type="Pfam" id="PF00288">
    <property type="entry name" value="GHMP_kinases_N"/>
    <property type="match status" value="1"/>
</dbReference>
<dbReference type="PIRSF" id="PIRSF010376">
    <property type="entry name" value="IspE"/>
    <property type="match status" value="1"/>
</dbReference>
<dbReference type="SUPFAM" id="SSF55060">
    <property type="entry name" value="GHMP Kinase, C-terminal domain"/>
    <property type="match status" value="1"/>
</dbReference>
<dbReference type="SUPFAM" id="SSF54211">
    <property type="entry name" value="Ribosomal protein S5 domain 2-like"/>
    <property type="match status" value="1"/>
</dbReference>
<proteinExistence type="inferred from homology"/>
<accession>Q1QED3</accession>
<sequence length="322" mass="34701">MTKNATSASVITRLSPAKINLFLHITGKRADGYHNLQTVFRLLDWGDYLHFSVADELIITIDSVADNSAVDNSSLCGQLLTLSGADTITSSIEDNLIFKAANALLASAINSNSLPKNLPKVSVRLDKHLPMGAGLGGGSSNAATTLLVLNKIWQINFDQDTLIKIGASIGADVPIFIFGQDAIAMGIGEELTAIDLPEQQYLVLTPKAHVNTAELFAHSKLQRDIAPLSIKTIQNHSNDYVQHLNTPYQNVFTPVVTNLAPAVDEALRYLQELETQALSTARMTGSGSAVFLPLDAGVISDKARLAKWIEEAPCPAYLVRNL</sequence>
<keyword id="KW-0067">ATP-binding</keyword>
<keyword id="KW-0414">Isoprene biosynthesis</keyword>
<keyword id="KW-0418">Kinase</keyword>
<keyword id="KW-0547">Nucleotide-binding</keyword>
<keyword id="KW-0808">Transferase</keyword>
<name>ISPE_PSYCK</name>
<protein>
    <recommendedName>
        <fullName evidence="1">4-diphosphocytidyl-2-C-methyl-D-erythritol kinase</fullName>
        <shortName evidence="1">CMK</shortName>
        <ecNumber evidence="1">2.7.1.148</ecNumber>
    </recommendedName>
    <alternativeName>
        <fullName evidence="1">4-(cytidine-5'-diphospho)-2-C-methyl-D-erythritol kinase</fullName>
    </alternativeName>
</protein>
<organism>
    <name type="scientific">Psychrobacter cryohalolentis (strain ATCC BAA-1226 / DSM 17306 / VKM B-2378 / K5)</name>
    <dbReference type="NCBI Taxonomy" id="335284"/>
    <lineage>
        <taxon>Bacteria</taxon>
        <taxon>Pseudomonadati</taxon>
        <taxon>Pseudomonadota</taxon>
        <taxon>Gammaproteobacteria</taxon>
        <taxon>Moraxellales</taxon>
        <taxon>Moraxellaceae</taxon>
        <taxon>Psychrobacter</taxon>
    </lineage>
</organism>
<evidence type="ECO:0000255" key="1">
    <source>
        <dbReference type="HAMAP-Rule" id="MF_00061"/>
    </source>
</evidence>
<feature type="chain" id="PRO_1000007879" description="4-diphosphocytidyl-2-C-methyl-D-erythritol kinase">
    <location>
        <begin position="1"/>
        <end position="322"/>
    </location>
</feature>
<feature type="active site" evidence="1">
    <location>
        <position position="18"/>
    </location>
</feature>
<feature type="active site" evidence="1">
    <location>
        <position position="172"/>
    </location>
</feature>
<feature type="binding site" evidence="1">
    <location>
        <begin position="130"/>
        <end position="140"/>
    </location>
    <ligand>
        <name>ATP</name>
        <dbReference type="ChEBI" id="CHEBI:30616"/>
    </ligand>
</feature>